<reference key="1">
    <citation type="journal article" date="2008" name="DNA Res.">
        <title>Determination of the genome sequence of Porphyromonas gingivalis strain ATCC 33277 and genomic comparison with strain W83 revealed extensive genome rearrangements in P. gingivalis.</title>
        <authorList>
            <person name="Naito M."/>
            <person name="Hirakawa H."/>
            <person name="Yamashita A."/>
            <person name="Ohara N."/>
            <person name="Shoji M."/>
            <person name="Yukitake H."/>
            <person name="Nakayama K."/>
            <person name="Toh H."/>
            <person name="Yoshimura F."/>
            <person name="Kuhara S."/>
            <person name="Hattori M."/>
            <person name="Hayashi T."/>
            <person name="Nakayama K."/>
        </authorList>
    </citation>
    <scope>NUCLEOTIDE SEQUENCE [LARGE SCALE GENOMIC DNA]</scope>
    <source>
        <strain>ATCC 33277 / DSM 20709 / CIP 103683 / JCM 12257 / NCTC 11834 / 2561</strain>
    </source>
</reference>
<sequence>MEMLQIAGKTFESRLFVGTGKFASSDLMEAVVLASQSRMVTVALKRVEIGRGEEDDMISRIVRHPEITLLPNTSGVRSAKEAILAAELAREALQTNWLKLEVHPDPRYLLPDPIETLRATEELVRRGFIVLPYVQADPVLCKHLEEAGAATVMPLGAPIGSNRGLKTREMIRIIIEQSRVPVVIDAGIGAPSQAAEAMEMGADAVLVNTAIAVAEDPVSMATAFRLAVEAGRMAFEAKLGSVRSEAEASSPFTSFLNLK</sequence>
<comment type="function">
    <text evidence="1">Catalyzes the rearrangement of 1-deoxy-D-xylulose 5-phosphate (DXP) to produce the thiazole phosphate moiety of thiamine. Sulfur is provided by the thiocarboxylate moiety of the carrier protein ThiS. In vitro, sulfur can be provided by H(2)S.</text>
</comment>
<comment type="catalytic activity">
    <reaction evidence="1">
        <text>[ThiS sulfur-carrier protein]-C-terminal-Gly-aminoethanethioate + 2-iminoacetate + 1-deoxy-D-xylulose 5-phosphate = [ThiS sulfur-carrier protein]-C-terminal Gly-Gly + 2-[(2R,5Z)-2-carboxy-4-methylthiazol-5(2H)-ylidene]ethyl phosphate + 2 H2O + H(+)</text>
        <dbReference type="Rhea" id="RHEA:26297"/>
        <dbReference type="Rhea" id="RHEA-COMP:12909"/>
        <dbReference type="Rhea" id="RHEA-COMP:19908"/>
        <dbReference type="ChEBI" id="CHEBI:15377"/>
        <dbReference type="ChEBI" id="CHEBI:15378"/>
        <dbReference type="ChEBI" id="CHEBI:57792"/>
        <dbReference type="ChEBI" id="CHEBI:62899"/>
        <dbReference type="ChEBI" id="CHEBI:77846"/>
        <dbReference type="ChEBI" id="CHEBI:90778"/>
        <dbReference type="ChEBI" id="CHEBI:232372"/>
        <dbReference type="EC" id="2.8.1.10"/>
    </reaction>
</comment>
<comment type="pathway">
    <text evidence="1">Cofactor biosynthesis; thiamine diphosphate biosynthesis.</text>
</comment>
<comment type="subunit">
    <text evidence="1">Homotetramer. Forms heterodimers with either ThiH or ThiS.</text>
</comment>
<comment type="subcellular location">
    <subcellularLocation>
        <location evidence="1">Cytoplasm</location>
    </subcellularLocation>
</comment>
<comment type="similarity">
    <text evidence="1">Belongs to the ThiG family.</text>
</comment>
<organism>
    <name type="scientific">Porphyromonas gingivalis (strain ATCC 33277 / DSM 20709 / CIP 103683 / JCM 12257 / NCTC 11834 / 2561)</name>
    <dbReference type="NCBI Taxonomy" id="431947"/>
    <lineage>
        <taxon>Bacteria</taxon>
        <taxon>Pseudomonadati</taxon>
        <taxon>Bacteroidota</taxon>
        <taxon>Bacteroidia</taxon>
        <taxon>Bacteroidales</taxon>
        <taxon>Porphyromonadaceae</taxon>
        <taxon>Porphyromonas</taxon>
    </lineage>
</organism>
<dbReference type="EC" id="2.8.1.10" evidence="1"/>
<dbReference type="EMBL" id="AP009380">
    <property type="protein sequence ID" value="BAG32677.1"/>
    <property type="molecule type" value="Genomic_DNA"/>
</dbReference>
<dbReference type="RefSeq" id="WP_012457288.1">
    <property type="nucleotide sequence ID" value="NC_010729.1"/>
</dbReference>
<dbReference type="SMR" id="B2RH32"/>
<dbReference type="GeneID" id="29255408"/>
<dbReference type="KEGG" id="pgn:PGN_0158"/>
<dbReference type="eggNOG" id="COG2022">
    <property type="taxonomic scope" value="Bacteria"/>
</dbReference>
<dbReference type="HOGENOM" id="CLU_062233_1_0_10"/>
<dbReference type="OrthoDB" id="9805935at2"/>
<dbReference type="BioCyc" id="PGIN431947:G1G2V-176-MONOMER"/>
<dbReference type="UniPathway" id="UPA00060"/>
<dbReference type="Proteomes" id="UP000008842">
    <property type="component" value="Chromosome"/>
</dbReference>
<dbReference type="GO" id="GO:0005737">
    <property type="term" value="C:cytoplasm"/>
    <property type="evidence" value="ECO:0007669"/>
    <property type="project" value="UniProtKB-SubCell"/>
</dbReference>
<dbReference type="GO" id="GO:1990107">
    <property type="term" value="F:thiazole synthase activity"/>
    <property type="evidence" value="ECO:0007669"/>
    <property type="project" value="UniProtKB-EC"/>
</dbReference>
<dbReference type="GO" id="GO:0009229">
    <property type="term" value="P:thiamine diphosphate biosynthetic process"/>
    <property type="evidence" value="ECO:0007669"/>
    <property type="project" value="UniProtKB-UniRule"/>
</dbReference>
<dbReference type="CDD" id="cd04728">
    <property type="entry name" value="ThiG"/>
    <property type="match status" value="1"/>
</dbReference>
<dbReference type="FunFam" id="3.20.20.70:FF:000049">
    <property type="entry name" value="Thiazole synthase"/>
    <property type="match status" value="1"/>
</dbReference>
<dbReference type="Gene3D" id="3.20.20.70">
    <property type="entry name" value="Aldolase class I"/>
    <property type="match status" value="1"/>
</dbReference>
<dbReference type="HAMAP" id="MF_00443">
    <property type="entry name" value="ThiG"/>
    <property type="match status" value="1"/>
</dbReference>
<dbReference type="InterPro" id="IPR013785">
    <property type="entry name" value="Aldolase_TIM"/>
</dbReference>
<dbReference type="InterPro" id="IPR033983">
    <property type="entry name" value="Thiazole_synthase_ThiG"/>
</dbReference>
<dbReference type="InterPro" id="IPR008867">
    <property type="entry name" value="ThiG"/>
</dbReference>
<dbReference type="PANTHER" id="PTHR34266">
    <property type="entry name" value="THIAZOLE SYNTHASE"/>
    <property type="match status" value="1"/>
</dbReference>
<dbReference type="PANTHER" id="PTHR34266:SF2">
    <property type="entry name" value="THIAZOLE SYNTHASE"/>
    <property type="match status" value="1"/>
</dbReference>
<dbReference type="Pfam" id="PF05690">
    <property type="entry name" value="ThiG"/>
    <property type="match status" value="1"/>
</dbReference>
<dbReference type="SUPFAM" id="SSF110399">
    <property type="entry name" value="ThiG-like"/>
    <property type="match status" value="1"/>
</dbReference>
<keyword id="KW-0963">Cytoplasm</keyword>
<keyword id="KW-0704">Schiff base</keyword>
<keyword id="KW-0784">Thiamine biosynthesis</keyword>
<keyword id="KW-0808">Transferase</keyword>
<accession>B2RH32</accession>
<feature type="chain" id="PRO_1000196883" description="Thiazole synthase">
    <location>
        <begin position="1"/>
        <end position="259"/>
    </location>
</feature>
<feature type="active site" description="Schiff-base intermediate with DXP" evidence="1">
    <location>
        <position position="99"/>
    </location>
</feature>
<feature type="binding site" evidence="1">
    <location>
        <position position="160"/>
    </location>
    <ligand>
        <name>1-deoxy-D-xylulose 5-phosphate</name>
        <dbReference type="ChEBI" id="CHEBI:57792"/>
    </ligand>
</feature>
<feature type="binding site" evidence="1">
    <location>
        <begin position="186"/>
        <end position="187"/>
    </location>
    <ligand>
        <name>1-deoxy-D-xylulose 5-phosphate</name>
        <dbReference type="ChEBI" id="CHEBI:57792"/>
    </ligand>
</feature>
<feature type="binding site" evidence="1">
    <location>
        <begin position="208"/>
        <end position="209"/>
    </location>
    <ligand>
        <name>1-deoxy-D-xylulose 5-phosphate</name>
        <dbReference type="ChEBI" id="CHEBI:57792"/>
    </ligand>
</feature>
<proteinExistence type="inferred from homology"/>
<protein>
    <recommendedName>
        <fullName evidence="1">Thiazole synthase</fullName>
        <ecNumber evidence="1">2.8.1.10</ecNumber>
    </recommendedName>
</protein>
<gene>
    <name evidence="1" type="primary">thiG</name>
    <name type="ordered locus">PGN_0158</name>
</gene>
<evidence type="ECO:0000255" key="1">
    <source>
        <dbReference type="HAMAP-Rule" id="MF_00443"/>
    </source>
</evidence>
<name>THIG_PORG3</name>